<organism>
    <name type="scientific">Bothrops mattogrossensis</name>
    <name type="common">Pitviper</name>
    <name type="synonym">Bothrops neuwiedi mattogrossensis</name>
    <dbReference type="NCBI Taxonomy" id="1171125"/>
    <lineage>
        <taxon>Eukaryota</taxon>
        <taxon>Metazoa</taxon>
        <taxon>Chordata</taxon>
        <taxon>Craniata</taxon>
        <taxon>Vertebrata</taxon>
        <taxon>Euteleostomi</taxon>
        <taxon>Lepidosauria</taxon>
        <taxon>Squamata</taxon>
        <taxon>Bifurcata</taxon>
        <taxon>Unidentata</taxon>
        <taxon>Episquamata</taxon>
        <taxon>Toxicofera</taxon>
        <taxon>Serpentes</taxon>
        <taxon>Colubroidea</taxon>
        <taxon>Viperidae</taxon>
        <taxon>Crotalinae</taxon>
        <taxon>Bothrops</taxon>
    </lineage>
</organism>
<accession>P0DUN8</accession>
<keyword id="KW-0903">Direct protein sequencing</keyword>
<keyword id="KW-1015">Disulfide bond</keyword>
<keyword id="KW-0959">Myotoxin</keyword>
<keyword id="KW-0964">Secreted</keyword>
<keyword id="KW-0800">Toxin</keyword>
<feature type="chain" id="PRO_0000452899" description="Basic phospholipase A2 homolog BmatTX-IV" evidence="4">
    <location>
        <begin position="1"/>
        <end position="51" status="greater than"/>
    </location>
</feature>
<feature type="disulfide bond" evidence="3">
    <location>
        <begin position="26"/>
        <end status="unknown"/>
    </location>
</feature>
<feature type="disulfide bond" evidence="3">
    <location>
        <begin position="28"/>
        <end position="44"/>
    </location>
</feature>
<feature type="disulfide bond" evidence="3">
    <location>
        <begin position="43"/>
        <end status="unknown"/>
    </location>
</feature>
<feature type="disulfide bond" evidence="3">
    <location>
        <begin position="49"/>
        <end status="unknown"/>
    </location>
</feature>
<feature type="disulfide bond" evidence="3">
    <location>
        <begin position="50"/>
        <end status="unknown"/>
    </location>
</feature>
<feature type="non-terminal residue" evidence="6">
    <location>
        <position position="51"/>
    </location>
</feature>
<name>PA2H4_BOTMT</name>
<proteinExistence type="evidence at protein level"/>
<dbReference type="SMR" id="P0DUN8"/>
<dbReference type="GO" id="GO:0005576">
    <property type="term" value="C:extracellular region"/>
    <property type="evidence" value="ECO:0007669"/>
    <property type="project" value="UniProtKB-SubCell"/>
</dbReference>
<dbReference type="GO" id="GO:0005509">
    <property type="term" value="F:calcium ion binding"/>
    <property type="evidence" value="ECO:0007669"/>
    <property type="project" value="InterPro"/>
</dbReference>
<dbReference type="GO" id="GO:0047498">
    <property type="term" value="F:calcium-dependent phospholipase A2 activity"/>
    <property type="evidence" value="ECO:0007669"/>
    <property type="project" value="TreeGrafter"/>
</dbReference>
<dbReference type="GO" id="GO:0005543">
    <property type="term" value="F:phospholipid binding"/>
    <property type="evidence" value="ECO:0007669"/>
    <property type="project" value="TreeGrafter"/>
</dbReference>
<dbReference type="GO" id="GO:0090729">
    <property type="term" value="F:toxin activity"/>
    <property type="evidence" value="ECO:0007669"/>
    <property type="project" value="UniProtKB-KW"/>
</dbReference>
<dbReference type="GO" id="GO:0050482">
    <property type="term" value="P:arachidonate secretion"/>
    <property type="evidence" value="ECO:0007669"/>
    <property type="project" value="InterPro"/>
</dbReference>
<dbReference type="GO" id="GO:0016042">
    <property type="term" value="P:lipid catabolic process"/>
    <property type="evidence" value="ECO:0007669"/>
    <property type="project" value="InterPro"/>
</dbReference>
<dbReference type="GO" id="GO:0042130">
    <property type="term" value="P:negative regulation of T cell proliferation"/>
    <property type="evidence" value="ECO:0007669"/>
    <property type="project" value="TreeGrafter"/>
</dbReference>
<dbReference type="GO" id="GO:0006644">
    <property type="term" value="P:phospholipid metabolic process"/>
    <property type="evidence" value="ECO:0007669"/>
    <property type="project" value="InterPro"/>
</dbReference>
<dbReference type="Gene3D" id="1.20.90.10">
    <property type="entry name" value="Phospholipase A2 domain"/>
    <property type="match status" value="1"/>
</dbReference>
<dbReference type="InterPro" id="IPR001211">
    <property type="entry name" value="PLipase_A2"/>
</dbReference>
<dbReference type="InterPro" id="IPR016090">
    <property type="entry name" value="PLipase_A2_dom"/>
</dbReference>
<dbReference type="InterPro" id="IPR036444">
    <property type="entry name" value="PLipase_A2_dom_sf"/>
</dbReference>
<dbReference type="InterPro" id="IPR033113">
    <property type="entry name" value="PLipase_A2_His_AS"/>
</dbReference>
<dbReference type="PANTHER" id="PTHR11716">
    <property type="entry name" value="PHOSPHOLIPASE A2 FAMILY MEMBER"/>
    <property type="match status" value="1"/>
</dbReference>
<dbReference type="PANTHER" id="PTHR11716:SF9">
    <property type="entry name" value="PHOSPHOLIPASE A2, MEMBRANE ASSOCIATED"/>
    <property type="match status" value="1"/>
</dbReference>
<dbReference type="Pfam" id="PF00068">
    <property type="entry name" value="Phospholip_A2_1"/>
    <property type="match status" value="1"/>
</dbReference>
<dbReference type="PRINTS" id="PR00389">
    <property type="entry name" value="PHPHLIPASEA2"/>
</dbReference>
<dbReference type="SMART" id="SM00085">
    <property type="entry name" value="PA2c"/>
    <property type="match status" value="1"/>
</dbReference>
<dbReference type="SUPFAM" id="SSF48619">
    <property type="entry name" value="Phospholipase A2, PLA2"/>
    <property type="match status" value="1"/>
</dbReference>
<dbReference type="PROSITE" id="PS00118">
    <property type="entry name" value="PA2_HIS"/>
    <property type="match status" value="1"/>
</dbReference>
<evidence type="ECO:0000250" key="1">
    <source>
        <dbReference type="UniProtKB" id="I6L8L6"/>
    </source>
</evidence>
<evidence type="ECO:0000250" key="2">
    <source>
        <dbReference type="UniProtKB" id="P0DMJ9"/>
    </source>
</evidence>
<evidence type="ECO:0000250" key="3">
    <source>
        <dbReference type="UniProtKB" id="Q90249"/>
    </source>
</evidence>
<evidence type="ECO:0000269" key="4">
    <source>
    </source>
</evidence>
<evidence type="ECO:0000303" key="5">
    <source>
    </source>
</evidence>
<evidence type="ECO:0000305" key="6"/>
<evidence type="ECO:0000305" key="7">
    <source>
    </source>
</evidence>
<reference key="1">
    <citation type="journal article" date="2019" name="Curr. Top. Med. Chem.">
        <title>Isolation, Biochemical Characterization and Antiparasitic Activity of BmatTX-IV, A Basic Lys49-Phospholipase A2 from the Venom of Bothrops mattogrossensis from Paraguay.</title>
        <authorList>
            <person name="Alfonso J.J."/>
            <person name="Kayano A.M."/>
            <person name="Garay A.F.G."/>
            <person name="Simoes-Silva R."/>
            <person name="Sobrinho J.C."/>
            <person name="Vourliotis S."/>
            <person name="Soares A.M."/>
            <person name="Calderon L.A."/>
            <person name="Gomez M.C.V."/>
        </authorList>
    </citation>
    <scope>PROTEIN SEQUENCE</scope>
    <scope>FUNCTION</scope>
    <scope>SUBCELLULAR LOCATION</scope>
    <source>
        <tissue>Venom</tissue>
    </source>
</reference>
<sequence length="51" mass="5531">SLVELGKMILQETGKNPVTSYGAYGCNCGVLGRGKPKDATDRCCYVHKCCY</sequence>
<comment type="function">
    <text evidence="1 2 4">Snake venom phospholipase A2 homolog that lacks enzymatic activity (PubMed:31340737). Shows cytotoxic activity (IC(50)=81.2 ug/mL) against murine fibroblasts (PubMed:31340737). Shows high myotoxic activity, neutrophile activation, slight cytotoxicity against tumor cell lines, and slight antiparasitic activity against promastigote forms of Leishmania amazonensis (By similarity). A model of myotoxic mechanism has been proposed: an apo Lys49-PLA2 is activated by the entrance of a hydrophobic molecule (e.g. fatty acid) at the hydrophobic channel of the protein leading to a reorientation of a monomer (By similarity). This reorientation causes a transition between 'inactive' to 'active' states, causing alignment of C-terminal and membrane-docking sites (MDoS) side-by-side and putting the membrane-disruption sites (MDiS) in the same plane, exposed to solvent and in a symmetric position for both monomers (By similarity). The MDoS region stabilizes the toxin on membrane by the interaction of charged residues with phospholipid head groups (By similarity). Subsequently, the MDiS region destabilizes the membrane with penetration of hydrophobic residues (By similarity). This insertion causes a disorganization of the membrane, allowing an uncontrolled influx of ions (i.e. calcium and sodium), and eventually triggering irreversible intracellular alterations and cell death (By similarity).</text>
</comment>
<comment type="subunit">
    <text evidence="2">Monomer.</text>
</comment>
<comment type="subcellular location">
    <subcellularLocation>
        <location evidence="4">Secreted</location>
    </subcellularLocation>
</comment>
<comment type="tissue specificity">
    <text evidence="7">Expressed by the venom gland.</text>
</comment>
<comment type="similarity">
    <text evidence="6">Belongs to the phospholipase A2 family. Group II subfamily. K49 sub-subfamily.</text>
</comment>
<comment type="caution">
    <text evidence="6">Does not bind calcium as one of the calcium-binding sites is lost (Asp-&gt;Lys in position 48, which corresponds to 'Lys-49' in the current nomenclature).</text>
</comment>
<protein>
    <recommendedName>
        <fullName evidence="5">Basic phospholipase A2 homolog BmatTX-IV</fullName>
        <shortName>svPLA2 homolog</shortName>
    </recommendedName>
    <alternativeName>
        <fullName>Lys49 PLA2-like</fullName>
    </alternativeName>
</protein>